<gene>
    <name evidence="1" type="primary">hemC</name>
    <name type="ordered locus">Tbd_2568</name>
</gene>
<feature type="chain" id="PRO_0000304288" description="Porphobilinogen deaminase">
    <location>
        <begin position="1"/>
        <end position="306"/>
    </location>
</feature>
<feature type="modified residue" description="S-(dipyrrolylmethanemethyl)cysteine" evidence="1">
    <location>
        <position position="240"/>
    </location>
</feature>
<comment type="function">
    <text evidence="1">Tetrapolymerization of the monopyrrole PBG into the hydroxymethylbilane pre-uroporphyrinogen in several discrete steps.</text>
</comment>
<comment type="catalytic activity">
    <reaction evidence="1">
        <text>4 porphobilinogen + H2O = hydroxymethylbilane + 4 NH4(+)</text>
        <dbReference type="Rhea" id="RHEA:13185"/>
        <dbReference type="ChEBI" id="CHEBI:15377"/>
        <dbReference type="ChEBI" id="CHEBI:28938"/>
        <dbReference type="ChEBI" id="CHEBI:57845"/>
        <dbReference type="ChEBI" id="CHEBI:58126"/>
        <dbReference type="EC" id="2.5.1.61"/>
    </reaction>
</comment>
<comment type="cofactor">
    <cofactor evidence="1">
        <name>dipyrromethane</name>
        <dbReference type="ChEBI" id="CHEBI:60342"/>
    </cofactor>
    <text evidence="1">Binds 1 dipyrromethane group covalently.</text>
</comment>
<comment type="pathway">
    <text evidence="1">Porphyrin-containing compound metabolism; protoporphyrin-IX biosynthesis; coproporphyrinogen-III from 5-aminolevulinate: step 2/4.</text>
</comment>
<comment type="subunit">
    <text evidence="1">Monomer.</text>
</comment>
<comment type="miscellaneous">
    <text evidence="1">The porphobilinogen subunits are added to the dipyrromethane group.</text>
</comment>
<comment type="similarity">
    <text evidence="1">Belongs to the HMBS family.</text>
</comment>
<dbReference type="EC" id="2.5.1.61" evidence="1"/>
<dbReference type="EMBL" id="CP000116">
    <property type="protein sequence ID" value="AAZ98521.1"/>
    <property type="molecule type" value="Genomic_DNA"/>
</dbReference>
<dbReference type="RefSeq" id="WP_011313080.1">
    <property type="nucleotide sequence ID" value="NC_007404.1"/>
</dbReference>
<dbReference type="SMR" id="Q3SFT5"/>
<dbReference type="STRING" id="292415.Tbd_2568"/>
<dbReference type="KEGG" id="tbd:Tbd_2568"/>
<dbReference type="eggNOG" id="COG0181">
    <property type="taxonomic scope" value="Bacteria"/>
</dbReference>
<dbReference type="HOGENOM" id="CLU_019704_0_2_4"/>
<dbReference type="OrthoDB" id="9810298at2"/>
<dbReference type="UniPathway" id="UPA00251">
    <property type="reaction ID" value="UER00319"/>
</dbReference>
<dbReference type="Proteomes" id="UP000008291">
    <property type="component" value="Chromosome"/>
</dbReference>
<dbReference type="GO" id="GO:0005737">
    <property type="term" value="C:cytoplasm"/>
    <property type="evidence" value="ECO:0007669"/>
    <property type="project" value="TreeGrafter"/>
</dbReference>
<dbReference type="GO" id="GO:0004418">
    <property type="term" value="F:hydroxymethylbilane synthase activity"/>
    <property type="evidence" value="ECO:0007669"/>
    <property type="project" value="UniProtKB-UniRule"/>
</dbReference>
<dbReference type="GO" id="GO:0006782">
    <property type="term" value="P:protoporphyrinogen IX biosynthetic process"/>
    <property type="evidence" value="ECO:0007669"/>
    <property type="project" value="UniProtKB-UniRule"/>
</dbReference>
<dbReference type="CDD" id="cd13646">
    <property type="entry name" value="PBP2_EcHMBS_like"/>
    <property type="match status" value="1"/>
</dbReference>
<dbReference type="FunFam" id="3.40.190.10:FF:000004">
    <property type="entry name" value="Porphobilinogen deaminase"/>
    <property type="match status" value="1"/>
</dbReference>
<dbReference type="FunFam" id="3.40.190.10:FF:000005">
    <property type="entry name" value="Porphobilinogen deaminase"/>
    <property type="match status" value="1"/>
</dbReference>
<dbReference type="Gene3D" id="3.40.190.10">
    <property type="entry name" value="Periplasmic binding protein-like II"/>
    <property type="match status" value="2"/>
</dbReference>
<dbReference type="Gene3D" id="3.30.160.40">
    <property type="entry name" value="Porphobilinogen deaminase, C-terminal domain"/>
    <property type="match status" value="1"/>
</dbReference>
<dbReference type="HAMAP" id="MF_00260">
    <property type="entry name" value="Porphobil_deam"/>
    <property type="match status" value="1"/>
</dbReference>
<dbReference type="InterPro" id="IPR000860">
    <property type="entry name" value="HemC"/>
</dbReference>
<dbReference type="InterPro" id="IPR022419">
    <property type="entry name" value="Porphobilin_deaminase_cofac_BS"/>
</dbReference>
<dbReference type="InterPro" id="IPR022417">
    <property type="entry name" value="Porphobilin_deaminase_N"/>
</dbReference>
<dbReference type="InterPro" id="IPR022418">
    <property type="entry name" value="Porphobilinogen_deaminase_C"/>
</dbReference>
<dbReference type="InterPro" id="IPR036803">
    <property type="entry name" value="Porphobilinogen_deaminase_C_sf"/>
</dbReference>
<dbReference type="NCBIfam" id="TIGR00212">
    <property type="entry name" value="hemC"/>
    <property type="match status" value="1"/>
</dbReference>
<dbReference type="PANTHER" id="PTHR11557">
    <property type="entry name" value="PORPHOBILINOGEN DEAMINASE"/>
    <property type="match status" value="1"/>
</dbReference>
<dbReference type="PANTHER" id="PTHR11557:SF0">
    <property type="entry name" value="PORPHOBILINOGEN DEAMINASE"/>
    <property type="match status" value="1"/>
</dbReference>
<dbReference type="Pfam" id="PF01379">
    <property type="entry name" value="Porphobil_deam"/>
    <property type="match status" value="1"/>
</dbReference>
<dbReference type="Pfam" id="PF03900">
    <property type="entry name" value="Porphobil_deamC"/>
    <property type="match status" value="1"/>
</dbReference>
<dbReference type="PIRSF" id="PIRSF001438">
    <property type="entry name" value="4pyrrol_synth_OHMeBilane_synth"/>
    <property type="match status" value="1"/>
</dbReference>
<dbReference type="PRINTS" id="PR00151">
    <property type="entry name" value="PORPHBDMNASE"/>
</dbReference>
<dbReference type="SUPFAM" id="SSF53850">
    <property type="entry name" value="Periplasmic binding protein-like II"/>
    <property type="match status" value="1"/>
</dbReference>
<dbReference type="SUPFAM" id="SSF54782">
    <property type="entry name" value="Porphobilinogen deaminase (hydroxymethylbilane synthase), C-terminal domain"/>
    <property type="match status" value="1"/>
</dbReference>
<dbReference type="PROSITE" id="PS00533">
    <property type="entry name" value="PORPHOBILINOGEN_DEAM"/>
    <property type="match status" value="1"/>
</dbReference>
<protein>
    <recommendedName>
        <fullName evidence="1">Porphobilinogen deaminase</fullName>
        <shortName evidence="1">PBG</shortName>
        <ecNumber evidence="1">2.5.1.61</ecNumber>
    </recommendedName>
    <alternativeName>
        <fullName evidence="1">Hydroxymethylbilane synthase</fullName>
        <shortName evidence="1">HMBS</shortName>
    </alternativeName>
    <alternativeName>
        <fullName evidence="1">Pre-uroporphyrinogen synthase</fullName>
    </alternativeName>
</protein>
<keyword id="KW-0627">Porphyrin biosynthesis</keyword>
<keyword id="KW-1185">Reference proteome</keyword>
<keyword id="KW-0808">Transferase</keyword>
<proteinExistence type="inferred from homology"/>
<accession>Q3SFT5</accession>
<sequence length="306" mass="32494">MHTLTIASRESALAMWQAEHIRDRLRELHPECKVNILGMTTRGDQILDVTLSKIGGKGLFVKELEVALAAGEADLAVHSMKDVPMELPPGFELAVIGEREDPRDAFVSNRYARLSDLPPGSVVGTSSLRREAQLRARYPHLTVKPLRGNVGTRLKKLDEGQFDAILLAAAGLKRLGLGARIKSLLSVEESIPAAGQGALGIEIRSGNTAVAAMLAPLNDPVTAACVRAERQVSRVLGGSCQVPLGAHASYKDGRLLLEGFVAKPDGSRFLVDRAEGDASDPEAVGQALADKLLAQGARAVLDALPA</sequence>
<reference key="1">
    <citation type="journal article" date="2006" name="J. Bacteriol.">
        <title>The genome sequence of the obligately chemolithoautotrophic, facultatively anaerobic bacterium Thiobacillus denitrificans.</title>
        <authorList>
            <person name="Beller H.R."/>
            <person name="Chain P.S."/>
            <person name="Letain T.E."/>
            <person name="Chakicherla A."/>
            <person name="Larimer F.W."/>
            <person name="Richardson P.M."/>
            <person name="Coleman M.A."/>
            <person name="Wood A.P."/>
            <person name="Kelly D.P."/>
        </authorList>
    </citation>
    <scope>NUCLEOTIDE SEQUENCE [LARGE SCALE GENOMIC DNA]</scope>
    <source>
        <strain>ATCC 25259 / T1</strain>
    </source>
</reference>
<name>HEM3_THIDA</name>
<organism>
    <name type="scientific">Thiobacillus denitrificans (strain ATCC 25259 / T1)</name>
    <dbReference type="NCBI Taxonomy" id="292415"/>
    <lineage>
        <taxon>Bacteria</taxon>
        <taxon>Pseudomonadati</taxon>
        <taxon>Pseudomonadota</taxon>
        <taxon>Betaproteobacteria</taxon>
        <taxon>Nitrosomonadales</taxon>
        <taxon>Thiobacillaceae</taxon>
        <taxon>Thiobacillus</taxon>
    </lineage>
</organism>
<evidence type="ECO:0000255" key="1">
    <source>
        <dbReference type="HAMAP-Rule" id="MF_00260"/>
    </source>
</evidence>